<name>BCSA3_KOMXY</name>
<keyword id="KW-0973">c-di-GMP</keyword>
<keyword id="KW-0997">Cell inner membrane</keyword>
<keyword id="KW-1003">Cell membrane</keyword>
<keyword id="KW-0135">Cellulose biosynthesis</keyword>
<keyword id="KW-0328">Glycosyltransferase</keyword>
<keyword id="KW-0472">Membrane</keyword>
<keyword id="KW-0808">Transferase</keyword>
<keyword id="KW-0812">Transmembrane</keyword>
<keyword id="KW-1133">Transmembrane helix</keyword>
<protein>
    <recommendedName>
        <fullName>Cellulose synthase 1 catalytic subunit [UDP-forming]</fullName>
        <ecNumber>2.4.1.12</ecNumber>
    </recommendedName>
</protein>
<dbReference type="EC" id="2.4.1.12"/>
<dbReference type="EMBL" id="AB015802">
    <property type="protein sequence ID" value="BAA77585.1"/>
    <property type="molecule type" value="Genomic_DNA"/>
</dbReference>
<dbReference type="SMR" id="Q9WX61"/>
<dbReference type="CAZy" id="GT2">
    <property type="family name" value="Glycosyltransferase Family 2"/>
</dbReference>
<dbReference type="UniPathway" id="UPA00694"/>
<dbReference type="GO" id="GO:0005886">
    <property type="term" value="C:plasma membrane"/>
    <property type="evidence" value="ECO:0007669"/>
    <property type="project" value="UniProtKB-SubCell"/>
</dbReference>
<dbReference type="GO" id="GO:0016760">
    <property type="term" value="F:cellulose synthase (UDP-forming) activity"/>
    <property type="evidence" value="ECO:0007669"/>
    <property type="project" value="UniProtKB-EC"/>
</dbReference>
<dbReference type="GO" id="GO:0035438">
    <property type="term" value="F:cyclic-di-GMP binding"/>
    <property type="evidence" value="ECO:0007669"/>
    <property type="project" value="InterPro"/>
</dbReference>
<dbReference type="GO" id="GO:0030244">
    <property type="term" value="P:cellulose biosynthetic process"/>
    <property type="evidence" value="ECO:0007669"/>
    <property type="project" value="UniProtKB-KW"/>
</dbReference>
<dbReference type="GO" id="GO:0006011">
    <property type="term" value="P:UDP-alpha-D-glucose metabolic process"/>
    <property type="evidence" value="ECO:0007669"/>
    <property type="project" value="InterPro"/>
</dbReference>
<dbReference type="CDD" id="cd06421">
    <property type="entry name" value="CESA_CelA_like"/>
    <property type="match status" value="1"/>
</dbReference>
<dbReference type="Gene3D" id="2.40.10.220">
    <property type="entry name" value="predicted glycosyltransferase like domains"/>
    <property type="match status" value="1"/>
</dbReference>
<dbReference type="Gene3D" id="3.90.550.10">
    <property type="entry name" value="Spore Coat Polysaccharide Biosynthesis Protein SpsA, Chain A"/>
    <property type="match status" value="1"/>
</dbReference>
<dbReference type="InterPro" id="IPR003919">
    <property type="entry name" value="Cell_synth_A"/>
</dbReference>
<dbReference type="InterPro" id="IPR005150">
    <property type="entry name" value="Cellulose_synth"/>
</dbReference>
<dbReference type="InterPro" id="IPR001173">
    <property type="entry name" value="Glyco_trans_2-like"/>
</dbReference>
<dbReference type="InterPro" id="IPR050321">
    <property type="entry name" value="Glycosyltr_2/OpgH_subfam"/>
</dbReference>
<dbReference type="InterPro" id="IPR029044">
    <property type="entry name" value="Nucleotide-diphossugar_trans"/>
</dbReference>
<dbReference type="InterPro" id="IPR009875">
    <property type="entry name" value="PilZ_domain"/>
</dbReference>
<dbReference type="NCBIfam" id="TIGR03030">
    <property type="entry name" value="CelA"/>
    <property type="match status" value="1"/>
</dbReference>
<dbReference type="PANTHER" id="PTHR43867">
    <property type="entry name" value="CELLULOSE SYNTHASE CATALYTIC SUBUNIT A [UDP-FORMING]"/>
    <property type="match status" value="1"/>
</dbReference>
<dbReference type="PANTHER" id="PTHR43867:SF2">
    <property type="entry name" value="CELLULOSE SYNTHASE CATALYTIC SUBUNIT A [UDP-FORMING]"/>
    <property type="match status" value="1"/>
</dbReference>
<dbReference type="Pfam" id="PF03552">
    <property type="entry name" value="Cellulose_synt"/>
    <property type="match status" value="1"/>
</dbReference>
<dbReference type="Pfam" id="PF00535">
    <property type="entry name" value="Glycos_transf_2"/>
    <property type="match status" value="1"/>
</dbReference>
<dbReference type="Pfam" id="PF07238">
    <property type="entry name" value="PilZ"/>
    <property type="match status" value="1"/>
</dbReference>
<dbReference type="PRINTS" id="PR01439">
    <property type="entry name" value="CELLSNTHASEA"/>
</dbReference>
<dbReference type="SUPFAM" id="SSF53448">
    <property type="entry name" value="Nucleotide-diphospho-sugar transferases"/>
    <property type="match status" value="1"/>
</dbReference>
<accession>Q9WX61</accession>
<proteinExistence type="inferred from homology"/>
<reference key="1">
    <citation type="journal article" date="1999" name="DNA Res.">
        <title>Cloning of cellulose synthase genes from Acetobacter xylinum JCM 7664: implication of a novel set of cellulose synthase genes.</title>
        <authorList>
            <person name="Umeda Y."/>
            <person name="Hirano A."/>
            <person name="Ishibashi M."/>
            <person name="Akiyama H."/>
            <person name="Onizuka T."/>
            <person name="Ikeuchi M."/>
            <person name="Inoue Y."/>
        </authorList>
    </citation>
    <scope>NUCLEOTIDE SEQUENCE [GENOMIC DNA]</scope>
    <source>
        <strain>JCM 7664 / NBRC 13693</strain>
    </source>
</reference>
<organism>
    <name type="scientific">Komagataeibacter xylinus</name>
    <name type="common">Gluconacetobacter xylinus</name>
    <dbReference type="NCBI Taxonomy" id="28448"/>
    <lineage>
        <taxon>Bacteria</taxon>
        <taxon>Pseudomonadati</taxon>
        <taxon>Pseudomonadota</taxon>
        <taxon>Alphaproteobacteria</taxon>
        <taxon>Acetobacterales</taxon>
        <taxon>Acetobacteraceae</taxon>
        <taxon>Komagataeibacter</taxon>
    </lineage>
</organism>
<evidence type="ECO:0000250" key="1"/>
<evidence type="ECO:0000255" key="2"/>
<evidence type="ECO:0000256" key="3">
    <source>
        <dbReference type="SAM" id="MobiDB-lite"/>
    </source>
</evidence>
<evidence type="ECO:0000305" key="4"/>
<feature type="chain" id="PRO_0000059264" description="Cellulose synthase 1 catalytic subunit [UDP-forming]">
    <location>
        <begin position="1"/>
        <end position="745"/>
    </location>
</feature>
<feature type="transmembrane region" description="Helical" evidence="2">
    <location>
        <begin position="29"/>
        <end position="49"/>
    </location>
</feature>
<feature type="transmembrane region" description="Helical" evidence="2">
    <location>
        <begin position="106"/>
        <end position="126"/>
    </location>
</feature>
<feature type="transmembrane region" description="Helical" evidence="2">
    <location>
        <begin position="153"/>
        <end position="173"/>
    </location>
</feature>
<feature type="transmembrane region" description="Helical" evidence="2">
    <location>
        <begin position="407"/>
        <end position="427"/>
    </location>
</feature>
<feature type="transmembrane region" description="Helical" evidence="2">
    <location>
        <begin position="430"/>
        <end position="450"/>
    </location>
</feature>
<feature type="transmembrane region" description="Helical" evidence="2">
    <location>
        <begin position="468"/>
        <end position="488"/>
    </location>
</feature>
<feature type="transmembrane region" description="Helical" evidence="2">
    <location>
        <begin position="515"/>
        <end position="535"/>
    </location>
</feature>
<feature type="transmembrane region" description="Helical" evidence="2">
    <location>
        <begin position="547"/>
        <end position="567"/>
    </location>
</feature>
<feature type="transmembrane region" description="Helical" evidence="2">
    <location>
        <begin position="649"/>
        <end position="669"/>
    </location>
</feature>
<feature type="domain" description="PilZ">
    <location>
        <begin position="572"/>
        <end position="670"/>
    </location>
</feature>
<feature type="region of interest" description="Catalytic subdomain A">
    <location>
        <begin position="147"/>
        <end position="240"/>
    </location>
</feature>
<feature type="region of interest" description="Catalytic subdomain B">
    <location>
        <begin position="317"/>
        <end position="377"/>
    </location>
</feature>
<feature type="region of interest" description="Disordered" evidence="3">
    <location>
        <begin position="708"/>
        <end position="745"/>
    </location>
</feature>
<feature type="compositionally biased region" description="Basic residues" evidence="3">
    <location>
        <begin position="708"/>
        <end position="717"/>
    </location>
</feature>
<feature type="compositionally biased region" description="Basic and acidic residues" evidence="3">
    <location>
        <begin position="736"/>
        <end position="745"/>
    </location>
</feature>
<feature type="active site" evidence="2">
    <location>
        <position position="189"/>
    </location>
</feature>
<feature type="active site" evidence="2">
    <location>
        <position position="333"/>
    </location>
</feature>
<feature type="binding site" evidence="2">
    <location>
        <position position="236"/>
    </location>
    <ligand>
        <name>substrate</name>
    </ligand>
</feature>
<feature type="binding site" evidence="2">
    <location>
        <position position="238"/>
    </location>
    <ligand>
        <name>substrate</name>
    </ligand>
</feature>
<comment type="function">
    <text evidence="1">Catalytic subunit of cellulose synthase. It polymerizes uridine 5'-diphosphate glucose to cellulose. The thick cellulosic mats generated by this enzyme probably provide a specialized protective environment to the bacterium (By similarity).</text>
</comment>
<comment type="catalytic activity">
    <reaction>
        <text>[(1-&gt;4)-beta-D-glucosyl](n) + UDP-alpha-D-glucose = [(1-&gt;4)-beta-D-glucosyl](n+1) + UDP + H(+)</text>
        <dbReference type="Rhea" id="RHEA:19929"/>
        <dbReference type="Rhea" id="RHEA-COMP:10033"/>
        <dbReference type="Rhea" id="RHEA-COMP:10034"/>
        <dbReference type="ChEBI" id="CHEBI:15378"/>
        <dbReference type="ChEBI" id="CHEBI:18246"/>
        <dbReference type="ChEBI" id="CHEBI:58223"/>
        <dbReference type="ChEBI" id="CHEBI:58885"/>
        <dbReference type="EC" id="2.4.1.12"/>
    </reaction>
</comment>
<comment type="cofactor">
    <cofactor evidence="1">
        <name>Mg(2+)</name>
        <dbReference type="ChEBI" id="CHEBI:18420"/>
    </cofactor>
</comment>
<comment type="activity regulation">
    <text evidence="1">Activated by bis-(3'-5') cyclic diguanylic acid (c-di-GMP).</text>
</comment>
<comment type="pathway">
    <text>Glycan metabolism; bacterial cellulose biosynthesis.</text>
</comment>
<comment type="subcellular location">
    <subcellularLocation>
        <location evidence="4">Cell inner membrane</location>
        <topology evidence="4">Multi-pass membrane protein</topology>
    </subcellularLocation>
</comment>
<comment type="domain">
    <text>There are two conserved domains in the globular part of the catalytic subunit: the N-terminal domain (domain A) contains the conserved DXD motif and is possibly involved in catalysis and substrate binding. The C-terminal domain (domain B) contains the QXXRW motif and is present only in processive glycosyl transferases. It could be involved in the processivity function of the enzyme, possibly required for holding the growing glycan chain in the active site.</text>
</comment>
<comment type="similarity">
    <text evidence="4">Belongs to the glycosyltransferase 2 family.</text>
</comment>
<sequence length="745" mass="83519">MSEVQSSAPAESWFGRFSNKILSLRGASYVVGALGLCALLAATMVTLSLNEQMIVALVCVAVFFIVGRRKSRRTQVFLEVLSALVSLRYLTWRLTETLDFDTWTQGILGVTLLLAELYALYMLFLSYFQTISPLHRAPLPLPANPDEWPTVDIFIPTYDEALSIVRLTVLGALGIDWPPDKVNVYILDDGRREEFARFAEACGARYIARPDNAHAKAGNLNYAIKHTTGDHILILDCDHIPTRAFLQISMGWMVSDSNIALLQTPHHFYSPDPFQRNLAVGYRTPPEGNLFYGVIQDGNDFWDATFFCGSCAILRRKAIEEIGGFATETVTEDAHTALRMQRKGWSTAYLRIPLASGLATERLITHIGQRMRWARGMIQIFRVDNPMLGSGLKLGQRLCYLSAMTSFFFAIPRVIFLASPLAFLFFSQNIIAASPLAVGVYAIPHMFHSIATAAKVNKGWRYSFWSEVYETVMALFLVRVTIVTMLFPSKGKFNVTEKGGVLEREEFDLTATYPNIIFAIIMALGLLRGLYALIFQHLDIISERAYALNCIWSVISLIILMAVISVGRETKQLRQSHRIEAQIPVTVYDYDGNSSHGITEDVSMGGVAIHLPWREVTPDHPVQVVIHAVLDGEEMNLPATMIRSAQGKAVFTWSISNIQVEAAVVRFVFGRADAWLQWNNYEDDRPLRSLWSLILSIKALFRRKGQMIAHSRPKKKPIALPVERREPTTSQGGQKQEGKISRAAS</sequence>
<gene>
    <name type="primary">bcsAI</name>
</gene>